<feature type="chain" id="PRO_0000082278" description="Taste receptor type 2 member 38">
    <location>
        <begin position="1"/>
        <end position="333"/>
    </location>
</feature>
<feature type="topological domain" description="Extracellular" evidence="2">
    <location>
        <begin position="1"/>
        <end position="17"/>
    </location>
</feature>
<feature type="transmembrane region" description="Helical; Name=1" evidence="2">
    <location>
        <begin position="18"/>
        <end position="38"/>
    </location>
</feature>
<feature type="topological domain" description="Cytoplasmic" evidence="2">
    <location>
        <begin position="39"/>
        <end position="55"/>
    </location>
</feature>
<feature type="transmembrane region" description="Helical; Name=2" evidence="2">
    <location>
        <begin position="56"/>
        <end position="76"/>
    </location>
</feature>
<feature type="topological domain" description="Extracellular" evidence="2">
    <location>
        <begin position="77"/>
        <end position="94"/>
    </location>
</feature>
<feature type="transmembrane region" description="Helical; Name=3" evidence="2">
    <location>
        <begin position="95"/>
        <end position="115"/>
    </location>
</feature>
<feature type="topological domain" description="Cytoplasmic" evidence="2">
    <location>
        <begin position="116"/>
        <end position="142"/>
    </location>
</feature>
<feature type="transmembrane region" description="Helical; Name=4" evidence="2">
    <location>
        <begin position="143"/>
        <end position="163"/>
    </location>
</feature>
<feature type="topological domain" description="Extracellular" evidence="2">
    <location>
        <begin position="164"/>
        <end position="190"/>
    </location>
</feature>
<feature type="transmembrane region" description="Helical; Name=5" evidence="2">
    <location>
        <begin position="191"/>
        <end position="211"/>
    </location>
</feature>
<feature type="topological domain" description="Cytoplasmic" evidence="2">
    <location>
        <begin position="212"/>
        <end position="251"/>
    </location>
</feature>
<feature type="transmembrane region" description="Helical; Name=6" evidence="2">
    <location>
        <begin position="252"/>
        <end position="272"/>
    </location>
</feature>
<feature type="topological domain" description="Extracellular" evidence="2">
    <location>
        <begin position="273"/>
        <end position="276"/>
    </location>
</feature>
<feature type="transmembrane region" description="Helical; Name=7" evidence="2">
    <location>
        <begin position="277"/>
        <end position="297"/>
    </location>
</feature>
<feature type="topological domain" description="Cytoplasmic" evidence="2">
    <location>
        <begin position="298"/>
        <end position="333"/>
    </location>
</feature>
<feature type="glycosylation site" description="N-linked (GlcNAc...) asparagine" evidence="2">
    <location>
        <position position="178"/>
    </location>
</feature>
<feature type="sequence conflict" description="In Ref. 2; AAU21176." evidence="3" ref="2">
    <original>R</original>
    <variation>H</variation>
    <location>
        <position position="6"/>
    </location>
</feature>
<feature type="sequence conflict" description="In Ref. 2; AAU21176." evidence="3" ref="2">
    <original>A</original>
    <variation>G</variation>
    <location>
        <position position="295"/>
    </location>
</feature>
<feature type="sequence conflict" description="In Ref. 2; AAU21176." evidence="3" ref="2">
    <original>R</original>
    <variation>K</variation>
    <location>
        <position position="322"/>
    </location>
</feature>
<proteinExistence type="inferred from homology"/>
<keyword id="KW-0297">G-protein coupled receptor</keyword>
<keyword id="KW-0325">Glycoprotein</keyword>
<keyword id="KW-0472">Membrane</keyword>
<keyword id="KW-0675">Receptor</keyword>
<keyword id="KW-0716">Sensory transduction</keyword>
<keyword id="KW-0919">Taste</keyword>
<keyword id="KW-0807">Transducer</keyword>
<keyword id="KW-0812">Transmembrane</keyword>
<keyword id="KW-1133">Transmembrane helix</keyword>
<dbReference type="EMBL" id="AY566404">
    <property type="protein sequence ID" value="AAS67624.1"/>
    <property type="molecule type" value="Genomic_DNA"/>
</dbReference>
<dbReference type="EMBL" id="AY724991">
    <property type="protein sequence ID" value="AAU21176.1"/>
    <property type="molecule type" value="Genomic_DNA"/>
</dbReference>
<dbReference type="SMR" id="Q697L3"/>
<dbReference type="GlyCosmos" id="Q697L3">
    <property type="glycosylation" value="1 site, No reported glycans"/>
</dbReference>
<dbReference type="GO" id="GO:0005886">
    <property type="term" value="C:plasma membrane"/>
    <property type="evidence" value="ECO:0007669"/>
    <property type="project" value="UniProtKB-ARBA"/>
</dbReference>
<dbReference type="GO" id="GO:0033038">
    <property type="term" value="F:bitter taste receptor activity"/>
    <property type="evidence" value="ECO:0007669"/>
    <property type="project" value="InterPro"/>
</dbReference>
<dbReference type="GO" id="GO:0004930">
    <property type="term" value="F:G protein-coupled receptor activity"/>
    <property type="evidence" value="ECO:0007669"/>
    <property type="project" value="UniProtKB-KW"/>
</dbReference>
<dbReference type="CDD" id="cd15025">
    <property type="entry name" value="7tm_TAS2R38"/>
    <property type="match status" value="1"/>
</dbReference>
<dbReference type="FunFam" id="1.20.1070.10:FF:000055">
    <property type="entry name" value="Taste receptor type 2"/>
    <property type="match status" value="1"/>
</dbReference>
<dbReference type="InterPro" id="IPR007960">
    <property type="entry name" value="TAS2R"/>
</dbReference>
<dbReference type="InterPro" id="IPR030050">
    <property type="entry name" value="TAS2R38"/>
</dbReference>
<dbReference type="PANTHER" id="PTHR11394">
    <property type="entry name" value="TASTE RECEPTOR TYPE 2"/>
    <property type="match status" value="1"/>
</dbReference>
<dbReference type="PANTHER" id="PTHR11394:SF52">
    <property type="entry name" value="TASTE RECEPTOR TYPE 2 MEMBER 38"/>
    <property type="match status" value="1"/>
</dbReference>
<dbReference type="Pfam" id="PF05296">
    <property type="entry name" value="TAS2R"/>
    <property type="match status" value="1"/>
</dbReference>
<dbReference type="SUPFAM" id="SSF81321">
    <property type="entry name" value="Family A G protein-coupled receptor-like"/>
    <property type="match status" value="1"/>
</dbReference>
<comment type="function">
    <text evidence="1">Receptor that may play a role in the perception of bitterness and is gustducin-linked. May play a role in sensing the chemical composition of the gastrointestinal content. The activity of this receptor may stimulate alpha gustducin, mediate PLC-beta-2 activation and lead to the gating of TRPM5 (By similarity).</text>
</comment>
<comment type="subcellular location">
    <subcellularLocation>
        <location>Membrane</location>
        <topology>Multi-pass membrane protein</topology>
    </subcellularLocation>
</comment>
<comment type="miscellaneous">
    <text>Most taste cells may be activated by a limited number of bitter compounds; individual taste cells can discriminate among bitter stimuli.</text>
</comment>
<comment type="similarity">
    <text evidence="3">Belongs to the G-protein coupled receptor T2R family.</text>
</comment>
<sequence length="333" mass="37826">MLTLTRICAVSYEVRSTFLFISVLEFAVGFLTNAFIFLVNFWDVVKRQPLSNSDCVLLCLSISRLFLHGLLFLSAIQLTHFQKLSEPLNHSYQAIIMLWIIANQANLWLAACLSLLYCSKLIRFSHTFLICLASWVSRKISQMLLGIILCSCICTVLCVWCFFSRPHFTVTTFLFMNNNTRLNWQIKDLNLFYSFLFCYLWSVPPFLLFLVSSGMLTVSLGRHMRTMKVYTRDSRDPSLEAHIKALKSLVSFFCFFVISSCAAFISVPLLILWRNKIGVMVCVGIMAACPSGHAAVLISGNATLRRAVTTILLWAQSSMKVRADHKADSRTLC</sequence>
<organism>
    <name type="scientific">Pongo pygmaeus</name>
    <name type="common">Bornean orangutan</name>
    <dbReference type="NCBI Taxonomy" id="9600"/>
    <lineage>
        <taxon>Eukaryota</taxon>
        <taxon>Metazoa</taxon>
        <taxon>Chordata</taxon>
        <taxon>Craniata</taxon>
        <taxon>Vertebrata</taxon>
        <taxon>Euteleostomi</taxon>
        <taxon>Mammalia</taxon>
        <taxon>Eutheria</taxon>
        <taxon>Euarchontoglires</taxon>
        <taxon>Primates</taxon>
        <taxon>Haplorrhini</taxon>
        <taxon>Catarrhini</taxon>
        <taxon>Hominidae</taxon>
        <taxon>Pongo</taxon>
    </lineage>
</organism>
<accession>Q697L3</accession>
<accession>Q645U3</accession>
<reference key="1">
    <citation type="submission" date="2004-03" db="EMBL/GenBank/DDBJ databases">
        <title>A global survey of haplotype frequencies for the TAS2R38 (PTC) gene.</title>
        <authorList>
            <person name="Davidson A.C."/>
            <person name="Pakstis A.J."/>
            <person name="Speed W.C."/>
            <person name="Odunsi A."/>
            <person name="Okonafua F."/>
            <person name="Kajuna S.L.J."/>
            <person name="Kungulilo S.V."/>
            <person name="Friedlaender J."/>
            <person name="Lu R.-B."/>
            <person name="Grigorenko E.L."/>
            <person name="Zhukova O.V."/>
            <person name="Schultz L.O."/>
            <person name="Bonne-Tamir B."/>
            <person name="Duffy V."/>
            <person name="Bartoshuk L."/>
            <person name="Kidd K.K."/>
            <person name="Kidd J.R."/>
        </authorList>
    </citation>
    <scope>NUCLEOTIDE SEQUENCE [GENOMIC DNA]</scope>
</reference>
<reference key="2">
    <citation type="journal article" date="2005" name="Mol. Biol. Evol.">
        <title>Evolution of bitter taste receptors in humans and apes.</title>
        <authorList>
            <person name="Fischer A."/>
            <person name="Gilad Y."/>
            <person name="Man O."/>
            <person name="Paeaebo S."/>
        </authorList>
    </citation>
    <scope>NUCLEOTIDE SEQUENCE [GENOMIC DNA]</scope>
</reference>
<name>T2R38_PONPY</name>
<protein>
    <recommendedName>
        <fullName>Taste receptor type 2 member 38</fullName>
        <shortName>T2R38</shortName>
    </recommendedName>
</protein>
<gene>
    <name type="primary">TAS2R38</name>
</gene>
<evidence type="ECO:0000250" key="1"/>
<evidence type="ECO:0000255" key="2"/>
<evidence type="ECO:0000305" key="3"/>